<proteinExistence type="inferred from homology"/>
<reference key="1">
    <citation type="book" date="2006" name="Gram positive pathogens, 2nd edition">
        <title>The Staphylococcus aureus NCTC 8325 genome.</title>
        <editorList>
            <person name="Fischetti V."/>
            <person name="Novick R."/>
            <person name="Ferretti J."/>
            <person name="Portnoy D."/>
            <person name="Rood J."/>
        </editorList>
        <authorList>
            <person name="Gillaspy A.F."/>
            <person name="Worrell V."/>
            <person name="Orvis J."/>
            <person name="Roe B.A."/>
            <person name="Dyer D.W."/>
            <person name="Iandolo J.J."/>
        </authorList>
    </citation>
    <scope>NUCLEOTIDE SEQUENCE [LARGE SCALE GENOMIC DNA]</scope>
    <source>
        <strain>NCTC 8325 / PS 47</strain>
    </source>
</reference>
<accession>Q2FVD5</accession>
<comment type="similarity">
    <text evidence="2">Belongs to the short-chain dehydrogenases/reductases (SDR) family.</text>
</comment>
<organism>
    <name type="scientific">Staphylococcus aureus (strain NCTC 8325 / PS 47)</name>
    <dbReference type="NCBI Taxonomy" id="93061"/>
    <lineage>
        <taxon>Bacteria</taxon>
        <taxon>Bacillati</taxon>
        <taxon>Bacillota</taxon>
        <taxon>Bacilli</taxon>
        <taxon>Bacillales</taxon>
        <taxon>Staphylococcaceae</taxon>
        <taxon>Staphylococcus</taxon>
    </lineage>
</organism>
<sequence length="231" mass="24604">MTVLTDKVAVVTGAGSGIGEAIATLLHEEGAKVVLAGRNKEKLQNVANQLSQDSVKVVPTDVTNKEEVDELIKIAQQTFGGLDIVINSAGQMLSSKITDYQVDEWDSMIDVNIKGTLYTAQAALPTMLEQSSGHLINIASISGFEVTKSSTIYSATKAAVHTITQGLEKELAKTGVKVTSISPGMVDTAITAAYNPTDRKKLEPQDIAEAVLYALTQPKHVNVNEITVRPV</sequence>
<name>Y2778_STAA8</name>
<gene>
    <name type="ordered locus">SAOUHSC_02778</name>
</gene>
<feature type="chain" id="PRO_0000300476" description="Uncharacterized oxidoreductase SAOUHSC_02778">
    <location>
        <begin position="1"/>
        <end position="231"/>
    </location>
</feature>
<feature type="active site" description="Proton acceptor" evidence="1">
    <location>
        <position position="153"/>
    </location>
</feature>
<feature type="binding site" evidence="1">
    <location>
        <begin position="10"/>
        <end position="34"/>
    </location>
    <ligand>
        <name>NADP(+)</name>
        <dbReference type="ChEBI" id="CHEBI:58349"/>
    </ligand>
</feature>
<feature type="binding site" evidence="1">
    <location>
        <position position="140"/>
    </location>
    <ligand>
        <name>substrate</name>
    </ligand>
</feature>
<keyword id="KW-0560">Oxidoreductase</keyword>
<keyword id="KW-1185">Reference proteome</keyword>
<evidence type="ECO:0000250" key="1"/>
<evidence type="ECO:0000305" key="2"/>
<dbReference type="EC" id="1.-.-.-"/>
<dbReference type="EMBL" id="CP000253">
    <property type="protein sequence ID" value="ABD31782.1"/>
    <property type="molecule type" value="Genomic_DNA"/>
</dbReference>
<dbReference type="RefSeq" id="WP_000217466.1">
    <property type="nucleotide sequence ID" value="NZ_LS483365.1"/>
</dbReference>
<dbReference type="RefSeq" id="YP_501238.1">
    <property type="nucleotide sequence ID" value="NC_007795.1"/>
</dbReference>
<dbReference type="SMR" id="Q2FVD5"/>
<dbReference type="STRING" id="93061.SAOUHSC_02778"/>
<dbReference type="PaxDb" id="1280-SAXN108_2731"/>
<dbReference type="GeneID" id="3921433"/>
<dbReference type="KEGG" id="sao:SAOUHSC_02778"/>
<dbReference type="PATRIC" id="fig|93061.5.peg.2513"/>
<dbReference type="eggNOG" id="COG4221">
    <property type="taxonomic scope" value="Bacteria"/>
</dbReference>
<dbReference type="HOGENOM" id="CLU_010194_2_10_9"/>
<dbReference type="OrthoDB" id="9775296at2"/>
<dbReference type="PRO" id="PR:Q2FVD5"/>
<dbReference type="Proteomes" id="UP000008816">
    <property type="component" value="Chromosome"/>
</dbReference>
<dbReference type="GO" id="GO:0016491">
    <property type="term" value="F:oxidoreductase activity"/>
    <property type="evidence" value="ECO:0007669"/>
    <property type="project" value="UniProtKB-KW"/>
</dbReference>
<dbReference type="CDD" id="cd05233">
    <property type="entry name" value="SDR_c"/>
    <property type="match status" value="1"/>
</dbReference>
<dbReference type="FunFam" id="3.40.50.720:FF:000047">
    <property type="entry name" value="NADP-dependent L-serine/L-allo-threonine dehydrogenase"/>
    <property type="match status" value="1"/>
</dbReference>
<dbReference type="Gene3D" id="3.40.50.720">
    <property type="entry name" value="NAD(P)-binding Rossmann-like Domain"/>
    <property type="match status" value="1"/>
</dbReference>
<dbReference type="InterPro" id="IPR036291">
    <property type="entry name" value="NAD(P)-bd_dom_sf"/>
</dbReference>
<dbReference type="InterPro" id="IPR002347">
    <property type="entry name" value="SDR_fam"/>
</dbReference>
<dbReference type="PANTHER" id="PTHR43115">
    <property type="entry name" value="DEHYDROGENASE/REDUCTASE SDR FAMILY MEMBER 11"/>
    <property type="match status" value="1"/>
</dbReference>
<dbReference type="PANTHER" id="PTHR43115:SF4">
    <property type="entry name" value="DEHYDROGENASE_REDUCTASE SDR FAMILY MEMBER 11"/>
    <property type="match status" value="1"/>
</dbReference>
<dbReference type="Pfam" id="PF00106">
    <property type="entry name" value="adh_short"/>
    <property type="match status" value="1"/>
</dbReference>
<dbReference type="PRINTS" id="PR00081">
    <property type="entry name" value="GDHRDH"/>
</dbReference>
<dbReference type="PRINTS" id="PR00080">
    <property type="entry name" value="SDRFAMILY"/>
</dbReference>
<dbReference type="SUPFAM" id="SSF51735">
    <property type="entry name" value="NAD(P)-binding Rossmann-fold domains"/>
    <property type="match status" value="1"/>
</dbReference>
<protein>
    <recommendedName>
        <fullName>Uncharacterized oxidoreductase SAOUHSC_02778</fullName>
        <ecNumber>1.-.-.-</ecNumber>
    </recommendedName>
</protein>